<accession>A1RST0</accession>
<protein>
    <recommendedName>
        <fullName evidence="1">Exosome complex component Rrp41</fullName>
        <ecNumber evidence="1">3.1.13.-</ecNumber>
    </recommendedName>
</protein>
<organism>
    <name type="scientific">Pyrobaculum islandicum (strain DSM 4184 / JCM 9189 / GEO3)</name>
    <dbReference type="NCBI Taxonomy" id="384616"/>
    <lineage>
        <taxon>Archaea</taxon>
        <taxon>Thermoproteota</taxon>
        <taxon>Thermoprotei</taxon>
        <taxon>Thermoproteales</taxon>
        <taxon>Thermoproteaceae</taxon>
        <taxon>Pyrobaculum</taxon>
    </lineage>
</organism>
<keyword id="KW-0963">Cytoplasm</keyword>
<keyword id="KW-0269">Exonuclease</keyword>
<keyword id="KW-0271">Exosome</keyword>
<keyword id="KW-0378">Hydrolase</keyword>
<keyword id="KW-0540">Nuclease</keyword>
<evidence type="ECO:0000255" key="1">
    <source>
        <dbReference type="HAMAP-Rule" id="MF_00591"/>
    </source>
</evidence>
<reference key="1">
    <citation type="submission" date="2006-12" db="EMBL/GenBank/DDBJ databases">
        <title>Complete sequence of Pyrobaculum islandicum DSM 4184.</title>
        <authorList>
            <person name="Copeland A."/>
            <person name="Lucas S."/>
            <person name="Lapidus A."/>
            <person name="Barry K."/>
            <person name="Detter J.C."/>
            <person name="Glavina del Rio T."/>
            <person name="Dalin E."/>
            <person name="Tice H."/>
            <person name="Pitluck S."/>
            <person name="Meincke L."/>
            <person name="Brettin T."/>
            <person name="Bruce D."/>
            <person name="Han C."/>
            <person name="Tapia R."/>
            <person name="Gilna P."/>
            <person name="Schmutz J."/>
            <person name="Larimer F."/>
            <person name="Land M."/>
            <person name="Hauser L."/>
            <person name="Kyrpides N."/>
            <person name="Mikhailova N."/>
            <person name="Cozen A.E."/>
            <person name="Fitz-Gibbon S.T."/>
            <person name="House C.H."/>
            <person name="Saltikov C."/>
            <person name="Lowe T."/>
            <person name="Richardson P."/>
        </authorList>
    </citation>
    <scope>NUCLEOTIDE SEQUENCE [LARGE SCALE GENOMIC DNA]</scope>
    <source>
        <strain>DSM 4184 / JCM 9189 / GEO3</strain>
    </source>
</reference>
<gene>
    <name evidence="1" type="primary">rrp41</name>
    <name type="ordered locus">Pisl_0836</name>
</gene>
<name>RRP41_PYRIL</name>
<proteinExistence type="inferred from homology"/>
<comment type="function">
    <text evidence="1">Catalytic component of the exosome, which is a complex involved in RNA degradation. Has 3'-&gt;5' exoribonuclease activity. Can also synthesize heteromeric RNA-tails.</text>
</comment>
<comment type="subunit">
    <text evidence="1">Component of the archaeal exosome complex. Forms a hexameric ring-like arrangement composed of 3 Rrp41-Rrp42 heterodimers. The hexameric ring associates with a trimer of Rrp4 and/or Csl4 subunits.</text>
</comment>
<comment type="subcellular location">
    <subcellularLocation>
        <location evidence="1">Cytoplasm</location>
    </subcellularLocation>
</comment>
<comment type="similarity">
    <text evidence="1">Belongs to the RNase PH family. Rrp41 subfamily.</text>
</comment>
<dbReference type="EC" id="3.1.13.-" evidence="1"/>
<dbReference type="EMBL" id="CP000504">
    <property type="protein sequence ID" value="ABL88012.1"/>
    <property type="molecule type" value="Genomic_DNA"/>
</dbReference>
<dbReference type="RefSeq" id="WP_011762588.1">
    <property type="nucleotide sequence ID" value="NC_008701.1"/>
</dbReference>
<dbReference type="SMR" id="A1RST0"/>
<dbReference type="STRING" id="384616.Pisl_0836"/>
<dbReference type="GeneID" id="4616440"/>
<dbReference type="KEGG" id="pis:Pisl_0836"/>
<dbReference type="eggNOG" id="arCOG01575">
    <property type="taxonomic scope" value="Archaea"/>
</dbReference>
<dbReference type="HOGENOM" id="CLU_063514_0_0_2"/>
<dbReference type="OrthoDB" id="24266at2157"/>
<dbReference type="Proteomes" id="UP000002595">
    <property type="component" value="Chromosome"/>
</dbReference>
<dbReference type="GO" id="GO:0000177">
    <property type="term" value="C:cytoplasmic exosome (RNase complex)"/>
    <property type="evidence" value="ECO:0007669"/>
    <property type="project" value="TreeGrafter"/>
</dbReference>
<dbReference type="GO" id="GO:0000175">
    <property type="term" value="F:3'-5'-RNA exonuclease activity"/>
    <property type="evidence" value="ECO:0007669"/>
    <property type="project" value="UniProtKB-UniRule"/>
</dbReference>
<dbReference type="GO" id="GO:0003723">
    <property type="term" value="F:RNA binding"/>
    <property type="evidence" value="ECO:0007669"/>
    <property type="project" value="TreeGrafter"/>
</dbReference>
<dbReference type="GO" id="GO:0010467">
    <property type="term" value="P:gene expression"/>
    <property type="evidence" value="ECO:0007669"/>
    <property type="project" value="UniProtKB-ARBA"/>
</dbReference>
<dbReference type="GO" id="GO:0016075">
    <property type="term" value="P:rRNA catabolic process"/>
    <property type="evidence" value="ECO:0007669"/>
    <property type="project" value="TreeGrafter"/>
</dbReference>
<dbReference type="CDD" id="cd11366">
    <property type="entry name" value="RNase_PH_archRRP41"/>
    <property type="match status" value="1"/>
</dbReference>
<dbReference type="FunFam" id="3.30.230.70:FF:000004">
    <property type="entry name" value="Exosome complex component Rrp41"/>
    <property type="match status" value="1"/>
</dbReference>
<dbReference type="Gene3D" id="3.30.230.70">
    <property type="entry name" value="GHMP Kinase, N-terminal domain"/>
    <property type="match status" value="1"/>
</dbReference>
<dbReference type="HAMAP" id="MF_00591">
    <property type="entry name" value="Exosome_Rrp41"/>
    <property type="match status" value="1"/>
</dbReference>
<dbReference type="InterPro" id="IPR001247">
    <property type="entry name" value="ExoRNase_PH_dom1"/>
</dbReference>
<dbReference type="InterPro" id="IPR015847">
    <property type="entry name" value="ExoRNase_PH_dom2"/>
</dbReference>
<dbReference type="InterPro" id="IPR036345">
    <property type="entry name" value="ExoRNase_PH_dom2_sf"/>
</dbReference>
<dbReference type="InterPro" id="IPR027408">
    <property type="entry name" value="PNPase/RNase_PH_dom_sf"/>
</dbReference>
<dbReference type="InterPro" id="IPR020568">
    <property type="entry name" value="Ribosomal_Su5_D2-typ_SF"/>
</dbReference>
<dbReference type="InterPro" id="IPR050080">
    <property type="entry name" value="RNase_PH"/>
</dbReference>
<dbReference type="InterPro" id="IPR011807">
    <property type="entry name" value="Rrp41"/>
</dbReference>
<dbReference type="NCBIfam" id="TIGR02065">
    <property type="entry name" value="ECX1"/>
    <property type="match status" value="1"/>
</dbReference>
<dbReference type="PANTHER" id="PTHR11953">
    <property type="entry name" value="EXOSOME COMPLEX COMPONENT"/>
    <property type="match status" value="1"/>
</dbReference>
<dbReference type="PANTHER" id="PTHR11953:SF0">
    <property type="entry name" value="EXOSOME COMPLEX COMPONENT RRP41"/>
    <property type="match status" value="1"/>
</dbReference>
<dbReference type="Pfam" id="PF01138">
    <property type="entry name" value="RNase_PH"/>
    <property type="match status" value="1"/>
</dbReference>
<dbReference type="Pfam" id="PF03725">
    <property type="entry name" value="RNase_PH_C"/>
    <property type="match status" value="1"/>
</dbReference>
<dbReference type="SUPFAM" id="SSF55666">
    <property type="entry name" value="Ribonuclease PH domain 2-like"/>
    <property type="match status" value="1"/>
</dbReference>
<dbReference type="SUPFAM" id="SSF54211">
    <property type="entry name" value="Ribosomal protein S5 domain 2-like"/>
    <property type="match status" value="1"/>
</dbReference>
<sequence>MKKPPVPLFQNGVRADGRAPDQMREVNITVGIVSNADGSAMVSYGATTAVAAVYGPREMHPRHLSLPDRGVMRVRYHMAPFSTKDERKSPTPTRREIEISKILREALEPAVVLEQYPRSRIDVFIEILQADGSTRVASLTAASLALADAGVYMRDLVIGVSVGLVDGAVVLDLNGLEDQYGEGDLPVGYMPNLKRFTLLQLDGAWTRDKFLEALNLAIKGAEFVYQKARDALKSKYMTIAEDIYGR</sequence>
<feature type="chain" id="PRO_1000146959" description="Exosome complex component Rrp41">
    <location>
        <begin position="1"/>
        <end position="246"/>
    </location>
</feature>